<evidence type="ECO:0000255" key="1">
    <source>
        <dbReference type="HAMAP-Rule" id="MF_00146"/>
    </source>
</evidence>
<dbReference type="EC" id="3.5.4.13" evidence="1"/>
<dbReference type="EMBL" id="CP000316">
    <property type="protein sequence ID" value="ABE43453.1"/>
    <property type="molecule type" value="Genomic_DNA"/>
</dbReference>
<dbReference type="RefSeq" id="WP_011482452.1">
    <property type="nucleotide sequence ID" value="NC_007948.1"/>
</dbReference>
<dbReference type="SMR" id="Q12DD9"/>
<dbReference type="STRING" id="296591.Bpro_1505"/>
<dbReference type="KEGG" id="pol:Bpro_1505"/>
<dbReference type="eggNOG" id="COG0717">
    <property type="taxonomic scope" value="Bacteria"/>
</dbReference>
<dbReference type="HOGENOM" id="CLU_087476_4_0_4"/>
<dbReference type="OrthoDB" id="9780956at2"/>
<dbReference type="UniPathway" id="UPA00610">
    <property type="reaction ID" value="UER00665"/>
</dbReference>
<dbReference type="Proteomes" id="UP000001983">
    <property type="component" value="Chromosome"/>
</dbReference>
<dbReference type="GO" id="GO:0008829">
    <property type="term" value="F:dCTP deaminase activity"/>
    <property type="evidence" value="ECO:0007669"/>
    <property type="project" value="UniProtKB-UniRule"/>
</dbReference>
<dbReference type="GO" id="GO:0000166">
    <property type="term" value="F:nucleotide binding"/>
    <property type="evidence" value="ECO:0007669"/>
    <property type="project" value="UniProtKB-KW"/>
</dbReference>
<dbReference type="GO" id="GO:0006226">
    <property type="term" value="P:dUMP biosynthetic process"/>
    <property type="evidence" value="ECO:0007669"/>
    <property type="project" value="UniProtKB-UniPathway"/>
</dbReference>
<dbReference type="GO" id="GO:0006229">
    <property type="term" value="P:dUTP biosynthetic process"/>
    <property type="evidence" value="ECO:0007669"/>
    <property type="project" value="UniProtKB-UniRule"/>
</dbReference>
<dbReference type="GO" id="GO:0015949">
    <property type="term" value="P:nucleobase-containing small molecule interconversion"/>
    <property type="evidence" value="ECO:0007669"/>
    <property type="project" value="TreeGrafter"/>
</dbReference>
<dbReference type="CDD" id="cd07557">
    <property type="entry name" value="trimeric_dUTPase"/>
    <property type="match status" value="1"/>
</dbReference>
<dbReference type="FunFam" id="2.70.40.10:FF:000001">
    <property type="entry name" value="dCTP deaminase"/>
    <property type="match status" value="1"/>
</dbReference>
<dbReference type="Gene3D" id="2.70.40.10">
    <property type="match status" value="1"/>
</dbReference>
<dbReference type="HAMAP" id="MF_00146">
    <property type="entry name" value="dCTP_deaminase"/>
    <property type="match status" value="1"/>
</dbReference>
<dbReference type="InterPro" id="IPR011962">
    <property type="entry name" value="dCTP_deaminase"/>
</dbReference>
<dbReference type="InterPro" id="IPR036157">
    <property type="entry name" value="dUTPase-like_sf"/>
</dbReference>
<dbReference type="InterPro" id="IPR033704">
    <property type="entry name" value="dUTPase_trimeric"/>
</dbReference>
<dbReference type="NCBIfam" id="TIGR02274">
    <property type="entry name" value="dCTP_deam"/>
    <property type="match status" value="1"/>
</dbReference>
<dbReference type="PANTHER" id="PTHR42680">
    <property type="entry name" value="DCTP DEAMINASE"/>
    <property type="match status" value="1"/>
</dbReference>
<dbReference type="PANTHER" id="PTHR42680:SF3">
    <property type="entry name" value="DCTP DEAMINASE"/>
    <property type="match status" value="1"/>
</dbReference>
<dbReference type="Pfam" id="PF22769">
    <property type="entry name" value="DCD"/>
    <property type="match status" value="1"/>
</dbReference>
<dbReference type="SUPFAM" id="SSF51283">
    <property type="entry name" value="dUTPase-like"/>
    <property type="match status" value="1"/>
</dbReference>
<reference key="1">
    <citation type="journal article" date="2008" name="Appl. Environ. Microbiol.">
        <title>The genome of Polaromonas sp. strain JS666: insights into the evolution of a hydrocarbon- and xenobiotic-degrading bacterium, and features of relevance to biotechnology.</title>
        <authorList>
            <person name="Mattes T.E."/>
            <person name="Alexander A.K."/>
            <person name="Richardson P.M."/>
            <person name="Munk A.C."/>
            <person name="Han C.S."/>
            <person name="Stothard P."/>
            <person name="Coleman N.V."/>
        </authorList>
    </citation>
    <scope>NUCLEOTIDE SEQUENCE [LARGE SCALE GENOMIC DNA]</scope>
    <source>
        <strain>JS666 / ATCC BAA-500</strain>
    </source>
</reference>
<comment type="function">
    <text evidence="1">Catalyzes the deamination of dCTP to dUTP.</text>
</comment>
<comment type="catalytic activity">
    <reaction evidence="1">
        <text>dCTP + H2O + H(+) = dUTP + NH4(+)</text>
        <dbReference type="Rhea" id="RHEA:22680"/>
        <dbReference type="ChEBI" id="CHEBI:15377"/>
        <dbReference type="ChEBI" id="CHEBI:15378"/>
        <dbReference type="ChEBI" id="CHEBI:28938"/>
        <dbReference type="ChEBI" id="CHEBI:61481"/>
        <dbReference type="ChEBI" id="CHEBI:61555"/>
        <dbReference type="EC" id="3.5.4.13"/>
    </reaction>
</comment>
<comment type="pathway">
    <text evidence="1">Pyrimidine metabolism; dUMP biosynthesis; dUMP from dCTP (dUTP route): step 1/2.</text>
</comment>
<comment type="subunit">
    <text evidence="1">Homotrimer.</text>
</comment>
<comment type="similarity">
    <text evidence="1">Belongs to the dCTP deaminase family.</text>
</comment>
<protein>
    <recommendedName>
        <fullName evidence="1">dCTP deaminase</fullName>
        <ecNumber evidence="1">3.5.4.13</ecNumber>
    </recommendedName>
    <alternativeName>
        <fullName evidence="1">Deoxycytidine triphosphate deaminase</fullName>
    </alternativeName>
</protein>
<accession>Q12DD9</accession>
<proteinExistence type="inferred from homology"/>
<keyword id="KW-0378">Hydrolase</keyword>
<keyword id="KW-0546">Nucleotide metabolism</keyword>
<keyword id="KW-0547">Nucleotide-binding</keyword>
<keyword id="KW-1185">Reference proteome</keyword>
<sequence>MSIKSDKWIRRMAESTGMIEPFEPGQIREADGKKIISYGTSSYGYDIRCAPEFKVFTNIHSTVVDPKNFDEKSFVDFHGDSCIIPPNSFALARTLEYFRIPRNVLTICLGKSTYARCGIIVNVTPFEPEWEGYVTLEFSNTTPLPAKIYAGEGCAQVLFFESDEVCETSYKDRGGKYQGQQGVTLPKA</sequence>
<organism>
    <name type="scientific">Polaromonas sp. (strain JS666 / ATCC BAA-500)</name>
    <dbReference type="NCBI Taxonomy" id="296591"/>
    <lineage>
        <taxon>Bacteria</taxon>
        <taxon>Pseudomonadati</taxon>
        <taxon>Pseudomonadota</taxon>
        <taxon>Betaproteobacteria</taxon>
        <taxon>Burkholderiales</taxon>
        <taxon>Comamonadaceae</taxon>
        <taxon>Polaromonas</taxon>
    </lineage>
</organism>
<name>DCD_POLSJ</name>
<feature type="chain" id="PRO_1000009780" description="dCTP deaminase">
    <location>
        <begin position="1"/>
        <end position="188"/>
    </location>
</feature>
<feature type="active site" description="Proton donor/acceptor" evidence="1">
    <location>
        <position position="137"/>
    </location>
</feature>
<feature type="binding site" evidence="1">
    <location>
        <begin position="111"/>
        <end position="116"/>
    </location>
    <ligand>
        <name>dCTP</name>
        <dbReference type="ChEBI" id="CHEBI:61481"/>
    </ligand>
</feature>
<feature type="binding site" evidence="1">
    <location>
        <begin position="135"/>
        <end position="137"/>
    </location>
    <ligand>
        <name>dCTP</name>
        <dbReference type="ChEBI" id="CHEBI:61481"/>
    </ligand>
</feature>
<feature type="binding site" evidence="1">
    <location>
        <position position="156"/>
    </location>
    <ligand>
        <name>dCTP</name>
        <dbReference type="ChEBI" id="CHEBI:61481"/>
    </ligand>
</feature>
<feature type="binding site" evidence="1">
    <location>
        <position position="170"/>
    </location>
    <ligand>
        <name>dCTP</name>
        <dbReference type="ChEBI" id="CHEBI:61481"/>
    </ligand>
</feature>
<feature type="binding site" evidence="1">
    <location>
        <position position="180"/>
    </location>
    <ligand>
        <name>dCTP</name>
        <dbReference type="ChEBI" id="CHEBI:61481"/>
    </ligand>
</feature>
<gene>
    <name evidence="1" type="primary">dcd</name>
    <name type="ordered locus">Bpro_1505</name>
</gene>